<protein>
    <recommendedName>
        <fullName evidence="1">UPF0299 membrane protein YohJ</fullName>
    </recommendedName>
</protein>
<reference key="1">
    <citation type="journal article" date="2011" name="J. Bacteriol.">
        <title>Comparative genomics of 28 Salmonella enterica isolates: evidence for CRISPR-mediated adaptive sublineage evolution.</title>
        <authorList>
            <person name="Fricke W.F."/>
            <person name="Mammel M.K."/>
            <person name="McDermott P.F."/>
            <person name="Tartera C."/>
            <person name="White D.G."/>
            <person name="Leclerc J.E."/>
            <person name="Ravel J."/>
            <person name="Cebula T.A."/>
        </authorList>
    </citation>
    <scope>NUCLEOTIDE SEQUENCE [LARGE SCALE GENOMIC DNA]</scope>
    <source>
        <strain>SL476</strain>
    </source>
</reference>
<accession>B4TAK3</accession>
<proteinExistence type="inferred from homology"/>
<comment type="subcellular location">
    <subcellularLocation>
        <location evidence="1">Cell inner membrane</location>
        <topology evidence="1">Multi-pass membrane protein</topology>
    </subcellularLocation>
</comment>
<comment type="similarity">
    <text evidence="1">Belongs to the UPF0299 family.</text>
</comment>
<dbReference type="EMBL" id="CP001120">
    <property type="protein sequence ID" value="ACF68069.1"/>
    <property type="molecule type" value="Genomic_DNA"/>
</dbReference>
<dbReference type="RefSeq" id="WP_000045719.1">
    <property type="nucleotide sequence ID" value="NC_011083.1"/>
</dbReference>
<dbReference type="SMR" id="B4TAK3"/>
<dbReference type="KEGG" id="seh:SeHA_C2416"/>
<dbReference type="HOGENOM" id="CLU_113736_1_1_6"/>
<dbReference type="Proteomes" id="UP000001866">
    <property type="component" value="Chromosome"/>
</dbReference>
<dbReference type="GO" id="GO:0005886">
    <property type="term" value="C:plasma membrane"/>
    <property type="evidence" value="ECO:0007669"/>
    <property type="project" value="UniProtKB-SubCell"/>
</dbReference>
<dbReference type="HAMAP" id="MF_01144">
    <property type="entry name" value="UPF0299"/>
    <property type="match status" value="1"/>
</dbReference>
<dbReference type="InterPro" id="IPR005538">
    <property type="entry name" value="LrgA/CidA"/>
</dbReference>
<dbReference type="InterPro" id="IPR022957">
    <property type="entry name" value="Uncharacterised_UPF0299"/>
</dbReference>
<dbReference type="NCBIfam" id="NF002494">
    <property type="entry name" value="PRK01821.1"/>
    <property type="match status" value="1"/>
</dbReference>
<dbReference type="PANTHER" id="PTHR33931">
    <property type="entry name" value="HOLIN-LIKE PROTEIN CIDA-RELATED"/>
    <property type="match status" value="1"/>
</dbReference>
<dbReference type="PANTHER" id="PTHR33931:SF5">
    <property type="entry name" value="UPF0299 MEMBRANE PROTEIN YOHJ"/>
    <property type="match status" value="1"/>
</dbReference>
<dbReference type="Pfam" id="PF03788">
    <property type="entry name" value="LrgA"/>
    <property type="match status" value="1"/>
</dbReference>
<name>YOHJ_SALHS</name>
<sequence length="132" mass="14614">MSKSLNIIWQYIRAFVLIYACLYAGIFLASLLPITIPGSIIGMLILFVLLALQILPAKWVNPGCYVLIRYMALLFVPIGVGVMQYFDLLRAQFGPVVVSCAISTLVVFVVVSWSSHLIHGERKVVGQKGTKK</sequence>
<organism>
    <name type="scientific">Salmonella heidelberg (strain SL476)</name>
    <dbReference type="NCBI Taxonomy" id="454169"/>
    <lineage>
        <taxon>Bacteria</taxon>
        <taxon>Pseudomonadati</taxon>
        <taxon>Pseudomonadota</taxon>
        <taxon>Gammaproteobacteria</taxon>
        <taxon>Enterobacterales</taxon>
        <taxon>Enterobacteriaceae</taxon>
        <taxon>Salmonella</taxon>
    </lineage>
</organism>
<keyword id="KW-0997">Cell inner membrane</keyword>
<keyword id="KW-1003">Cell membrane</keyword>
<keyword id="KW-0472">Membrane</keyword>
<keyword id="KW-0812">Transmembrane</keyword>
<keyword id="KW-1133">Transmembrane helix</keyword>
<gene>
    <name evidence="1" type="primary">yohJ</name>
    <name type="ordered locus">SeHA_C2416</name>
</gene>
<evidence type="ECO:0000255" key="1">
    <source>
        <dbReference type="HAMAP-Rule" id="MF_01144"/>
    </source>
</evidence>
<feature type="chain" id="PRO_1000137371" description="UPF0299 membrane protein YohJ">
    <location>
        <begin position="1"/>
        <end position="132"/>
    </location>
</feature>
<feature type="transmembrane region" description="Helical" evidence="1">
    <location>
        <begin position="7"/>
        <end position="27"/>
    </location>
</feature>
<feature type="transmembrane region" description="Helical" evidence="1">
    <location>
        <begin position="31"/>
        <end position="51"/>
    </location>
</feature>
<feature type="transmembrane region" description="Helical" evidence="1">
    <location>
        <begin position="63"/>
        <end position="83"/>
    </location>
</feature>
<feature type="transmembrane region" description="Helical" evidence="1">
    <location>
        <begin position="93"/>
        <end position="113"/>
    </location>
</feature>